<accession>Q98ST6</accession>
<organism>
    <name type="scientific">Gallus gallus</name>
    <name type="common">Chicken</name>
    <dbReference type="NCBI Taxonomy" id="9031"/>
    <lineage>
        <taxon>Eukaryota</taxon>
        <taxon>Metazoa</taxon>
        <taxon>Chordata</taxon>
        <taxon>Craniata</taxon>
        <taxon>Vertebrata</taxon>
        <taxon>Euteleostomi</taxon>
        <taxon>Archelosauria</taxon>
        <taxon>Archosauria</taxon>
        <taxon>Dinosauria</taxon>
        <taxon>Saurischia</taxon>
        <taxon>Theropoda</taxon>
        <taxon>Coelurosauria</taxon>
        <taxon>Aves</taxon>
        <taxon>Neognathae</taxon>
        <taxon>Galloanserae</taxon>
        <taxon>Galliformes</taxon>
        <taxon>Phasianidae</taxon>
        <taxon>Phasianinae</taxon>
        <taxon>Gallus</taxon>
    </lineage>
</organism>
<keyword id="KW-0217">Developmental protein</keyword>
<keyword id="KW-0325">Glycoprotein</keyword>
<keyword id="KW-0646">Protease inhibitor</keyword>
<keyword id="KW-1185">Reference proteome</keyword>
<keyword id="KW-0964">Secreted</keyword>
<keyword id="KW-0732">Signal</keyword>
<reference key="1">
    <citation type="journal article" date="2001" name="Mech. Dev.">
        <title>Cloning and expression of a novel cysteine-rich secreted protein family member expressed in thyroid and pancreatic mesoderm within the chicken embryo.</title>
        <authorList>
            <person name="Smith D.M."/>
            <person name="Collins-Racie L.A."/>
            <person name="Marigo V.A."/>
            <person name="Roberts D.J."/>
            <person name="Davis N.M."/>
            <person name="Hartmann C."/>
            <person name="Schweitzer R."/>
            <person name="LaVallie E.R."/>
            <person name="Gamer L."/>
            <person name="McCoy J."/>
            <person name="Tabin C.J."/>
        </authorList>
    </citation>
    <scope>NUCLEOTIDE SEQUENCE [MRNA]</scope>
    <scope>DEVELOPMENTAL STAGE</scope>
    <source>
        <tissue>Limb bud</tissue>
    </source>
</reference>
<reference key="2">
    <citation type="journal article" date="2015" name="Dev. Biol.">
        <title>Identification and functional analysis of novel facial patterning genes in the duplicated beak chicken embryo.</title>
        <authorList>
            <person name="Nimmagadda S."/>
            <person name="Buchtova M."/>
            <person name="Fu K."/>
            <person name="Geetha-Loganathan P."/>
            <person name="Hosseini-Farahabadi S."/>
            <person name="Trachtenberg A.J."/>
            <person name="Kuo W.P."/>
            <person name="Vesela I."/>
            <person name="Richman J.M."/>
        </authorList>
    </citation>
    <scope>FUNCTION</scope>
    <scope>DEVELOPMENTAL STAGE</scope>
    <scope>INDUCTION BY NOG AND RETINOIC ACID</scope>
</reference>
<protein>
    <recommendedName>
        <fullName>Peptidase inhibitor 15</fullName>
    </recommendedName>
    <alternativeName>
        <fullName>SugarCrisp</fullName>
    </alternativeName>
</protein>
<comment type="function">
    <text evidence="1 4">Serine protease inhibitor which displays weak inhibitory activity against trypsin (By similarity). May play a role in facial patterning during embryonic development (PubMed:26385749).</text>
</comment>
<comment type="subcellular location">
    <subcellularLocation>
        <location evidence="1">Secreted</location>
    </subcellularLocation>
</comment>
<comment type="developmental stage">
    <text evidence="3 4">First expressed the mesoderm of the emerging dorsal pancreatic bud at stage 17-18. Also expressed in the thyroid anlagen. Expression persists throughout the dorsal pancreatic mesoderm through 6 dpc as the pancreas continues to enlarge. After 6 dpc, the amount of mesoderm in the pancreas declines to a minimal level and little or no expression is seen. The expression in the mesoderm of the thyroid persists at least through 8 dpc in the development of this organ. Weakly expressed within the emerging lung buds and developing gut. Also expressed in developing carniofacial structures. At stage 17, expression is restricted to the cranial paraxial mesoderm. At stage 24, expressed in the corners of the frontonasal mass (globular processes) where the lip will fuse. At stage 26 through 29, becomes focused in the center of the frontonasal mass. At stage 30, further restricted to the future egg tooth. By stage 34, found in the egg tooth and structures derived from the frontonasal mass, such as the premaxillary mesenchyme (PubMed:26385749).</text>
</comment>
<comment type="induction">
    <text evidence="4">Up-regulated by Noggin/NOG and retinoic acid. May be a direct retinoic acid target.</text>
</comment>
<comment type="miscellaneous">
    <text>Was named SugarCrisp after the breakfast cereal.</text>
</comment>
<comment type="similarity">
    <text evidence="5">Belongs to the CRISP family.</text>
</comment>
<sequence length="258" mass="29239">MTIIAAISCVFLFSILCETSALVLPNSTDLLLSNNNFTDIETALAAHLDSAKIPKARRKRYISQNDMIAILDYHNQVRGKVFPPASNMEYMVWDETLAKSAEAWAATCIWDHGPSYLLRFLGQNLSVRTGRYRSILQLVKPWYDEVKDYAFPYPQDCNPRCPMRCYGPMCTHYTQMVWATSNRIGCAIHTCQNMNVWGSVWRRAVYLVCNYAPKGNWIGEAPYKVGVPCSACPPSYGGSCTDNLCFPGVTSNYLYWFK</sequence>
<name>PI15_CHICK</name>
<dbReference type="EMBL" id="AF329195">
    <property type="protein sequence ID" value="AAK16493.1"/>
    <property type="molecule type" value="mRNA"/>
</dbReference>
<dbReference type="RefSeq" id="NP_001383036.1">
    <property type="nucleotide sequence ID" value="NM_001396107.1"/>
</dbReference>
<dbReference type="RefSeq" id="NP_989665.1">
    <property type="nucleotide sequence ID" value="NM_204334.2"/>
</dbReference>
<dbReference type="SMR" id="Q98ST6"/>
<dbReference type="FunCoup" id="Q98ST6">
    <property type="interactions" value="1"/>
</dbReference>
<dbReference type="STRING" id="9031.ENSGALP00000051751"/>
<dbReference type="GlyCosmos" id="Q98ST6">
    <property type="glycosylation" value="3 sites, No reported glycans"/>
</dbReference>
<dbReference type="GlyGen" id="Q98ST6">
    <property type="glycosylation" value="3 sites"/>
</dbReference>
<dbReference type="PaxDb" id="9031-ENSGALP00000035875"/>
<dbReference type="Ensembl" id="ENSGALT00010008293.1">
    <property type="protein sequence ID" value="ENSGALP00010004915.1"/>
    <property type="gene ID" value="ENSGALG00010003552.1"/>
</dbReference>
<dbReference type="GeneID" id="374241"/>
<dbReference type="KEGG" id="gga:374241"/>
<dbReference type="CTD" id="51050"/>
<dbReference type="VEuPathDB" id="HostDB:geneid_374241"/>
<dbReference type="eggNOG" id="KOG3017">
    <property type="taxonomic scope" value="Eukaryota"/>
</dbReference>
<dbReference type="GeneTree" id="ENSGT00940000158635"/>
<dbReference type="HOGENOM" id="CLU_035730_2_2_1"/>
<dbReference type="InParanoid" id="Q98ST6"/>
<dbReference type="OMA" id="QLVQPWY"/>
<dbReference type="OrthoDB" id="414826at2759"/>
<dbReference type="PhylomeDB" id="Q98ST6"/>
<dbReference type="TreeFam" id="TF316148"/>
<dbReference type="PRO" id="PR:Q98ST6"/>
<dbReference type="Proteomes" id="UP000000539">
    <property type="component" value="Chromosome 2"/>
</dbReference>
<dbReference type="Bgee" id="ENSGALG00000029264">
    <property type="expression patterns" value="Expressed in colon and 1 other cell type or tissue"/>
</dbReference>
<dbReference type="GO" id="GO:0005615">
    <property type="term" value="C:extracellular space"/>
    <property type="evidence" value="ECO:0000318"/>
    <property type="project" value="GO_Central"/>
</dbReference>
<dbReference type="GO" id="GO:0030414">
    <property type="term" value="F:peptidase inhibitor activity"/>
    <property type="evidence" value="ECO:0007669"/>
    <property type="project" value="UniProtKB-KW"/>
</dbReference>
<dbReference type="CDD" id="cd18814">
    <property type="entry name" value="CAP_PI15"/>
    <property type="match status" value="1"/>
</dbReference>
<dbReference type="FunFam" id="3.40.33.10:FF:000003">
    <property type="entry name" value="Peptidase inhibitor 15"/>
    <property type="match status" value="1"/>
</dbReference>
<dbReference type="Gene3D" id="3.40.33.10">
    <property type="entry name" value="CAP"/>
    <property type="match status" value="1"/>
</dbReference>
<dbReference type="InterPro" id="IPR018244">
    <property type="entry name" value="Allrgn_V5/Tpx1_CS"/>
</dbReference>
<dbReference type="InterPro" id="IPR014044">
    <property type="entry name" value="CAP_dom"/>
</dbReference>
<dbReference type="InterPro" id="IPR035940">
    <property type="entry name" value="CAP_sf"/>
</dbReference>
<dbReference type="InterPro" id="IPR001283">
    <property type="entry name" value="CRISP-related"/>
</dbReference>
<dbReference type="InterPro" id="IPR047832">
    <property type="entry name" value="PI15_CAP"/>
</dbReference>
<dbReference type="PANTHER" id="PTHR10334">
    <property type="entry name" value="CYSTEINE-RICH SECRETORY PROTEIN-RELATED"/>
    <property type="match status" value="1"/>
</dbReference>
<dbReference type="Pfam" id="PF00188">
    <property type="entry name" value="CAP"/>
    <property type="match status" value="1"/>
</dbReference>
<dbReference type="PRINTS" id="PR00837">
    <property type="entry name" value="V5TPXLIKE"/>
</dbReference>
<dbReference type="SMART" id="SM00198">
    <property type="entry name" value="SCP"/>
    <property type="match status" value="1"/>
</dbReference>
<dbReference type="SUPFAM" id="SSF55797">
    <property type="entry name" value="PR-1-like"/>
    <property type="match status" value="1"/>
</dbReference>
<dbReference type="PROSITE" id="PS01010">
    <property type="entry name" value="CRISP_2"/>
    <property type="match status" value="1"/>
</dbReference>
<feature type="signal peptide" evidence="2">
    <location>
        <begin position="1"/>
        <end position="21"/>
    </location>
</feature>
<feature type="propeptide" id="PRO_0000287626" evidence="1">
    <location>
        <begin position="22"/>
        <end position="60"/>
    </location>
</feature>
<feature type="chain" id="PRO_0000287627" description="Peptidase inhibitor 15">
    <location>
        <begin position="61"/>
        <end position="258"/>
    </location>
</feature>
<feature type="domain" description="SCP">
    <location>
        <begin position="71"/>
        <end position="211"/>
    </location>
</feature>
<feature type="glycosylation site" description="N-linked (GlcNAc...) asparagine" evidence="2">
    <location>
        <position position="26"/>
    </location>
</feature>
<feature type="glycosylation site" description="N-linked (GlcNAc...) asparagine" evidence="2">
    <location>
        <position position="36"/>
    </location>
</feature>
<feature type="glycosylation site" description="N-linked (GlcNAc...) asparagine" evidence="2">
    <location>
        <position position="124"/>
    </location>
</feature>
<evidence type="ECO:0000250" key="1">
    <source>
        <dbReference type="UniProtKB" id="O43692"/>
    </source>
</evidence>
<evidence type="ECO:0000255" key="2"/>
<evidence type="ECO:0000269" key="3">
    <source>
    </source>
</evidence>
<evidence type="ECO:0000269" key="4">
    <source>
    </source>
</evidence>
<evidence type="ECO:0000305" key="5"/>
<gene>
    <name type="primary">PI15</name>
</gene>
<proteinExistence type="evidence at transcript level"/>